<keyword id="KW-0106">Calcium</keyword>
<keyword id="KW-0963">Cytoplasm</keyword>
<keyword id="KW-0479">Metal-binding</keyword>
<keyword id="KW-1267">Proteomics identification</keyword>
<keyword id="KW-1185">Reference proteome</keyword>
<keyword id="KW-0677">Repeat</keyword>
<reference key="1">
    <citation type="journal article" date="2000" name="J. Biol. Chem.">
        <title>Five members of a novel Ca(2+)-binding protein (CABP) subfamily with similarity to calmodulin.</title>
        <authorList>
            <person name="Haeseleer F."/>
            <person name="Sokal I."/>
            <person name="Verlinde C.L.M.J."/>
            <person name="Erdjument-Bromage H."/>
            <person name="Tempst P."/>
            <person name="Pronin A.N."/>
            <person name="Benovic J.L."/>
            <person name="Fariss R.N."/>
            <person name="Palczewski K."/>
        </authorList>
    </citation>
    <scope>NUCLEOTIDE SEQUENCE [GENOMIC DNA / MRNA]</scope>
    <source>
        <tissue>Retina</tissue>
    </source>
</reference>
<reference key="2">
    <citation type="journal article" date="2004" name="Genome Res.">
        <title>The status, quality, and expansion of the NIH full-length cDNA project: the Mammalian Gene Collection (MGC).</title>
        <authorList>
            <consortium name="The MGC Project Team"/>
        </authorList>
    </citation>
    <scope>NUCLEOTIDE SEQUENCE [LARGE SCALE MRNA]</scope>
</reference>
<reference key="3">
    <citation type="journal article" date="2000" name="Biochim. Biophys. Acta">
        <title>Ca(2+)-binding proteins in the retina: from discovery to etiology of human disease.</title>
        <authorList>
            <person name="Sokal I."/>
            <person name="Li N."/>
            <person name="Verlinde C.L.M.J."/>
            <person name="Haeseleer F."/>
            <person name="Baehr W."/>
            <person name="Palczewski K."/>
        </authorList>
    </citation>
    <scope>TISSUE SPECIFICITY</scope>
</reference>
<reference key="4">
    <citation type="journal article" date="2009" name="Biochem. Biophys. Res. Commun.">
        <title>Membrane targeting of the EF-hand containing calcium-sensing proteins CaBP7 and CaBP8.</title>
        <authorList>
            <person name="McCue H.V."/>
            <person name="Burgoyne R.D."/>
            <person name="Haynes L.P."/>
        </authorList>
    </citation>
    <scope>SUBCELLULAR LOCATION</scope>
</reference>
<organism>
    <name type="scientific">Homo sapiens</name>
    <name type="common">Human</name>
    <dbReference type="NCBI Taxonomy" id="9606"/>
    <lineage>
        <taxon>Eukaryota</taxon>
        <taxon>Metazoa</taxon>
        <taxon>Chordata</taxon>
        <taxon>Craniata</taxon>
        <taxon>Vertebrata</taxon>
        <taxon>Euteleostomi</taxon>
        <taxon>Mammalia</taxon>
        <taxon>Eutheria</taxon>
        <taxon>Euarchontoglires</taxon>
        <taxon>Primates</taxon>
        <taxon>Haplorrhini</taxon>
        <taxon>Catarrhini</taxon>
        <taxon>Hominidae</taxon>
        <taxon>Homo</taxon>
    </lineage>
</organism>
<sequence>MQFPMGPACIFLRKGIAEKQRERPLGQDEIEELREAFLEFDKDRDGFISCKDLGNLMRTMGYMPTEMELIELGQQIRMNLGGRVDFDDFVELMTPKLLAETAGMIGVQEMRDAFKEFDTNGDGEITLVELQQAMQRLLGERLTPREISEVVREADVNGDGTVDFEEFVKMMSR</sequence>
<name>CABP5_HUMAN</name>
<gene>
    <name type="primary">CABP5</name>
    <name type="synonym">CABP3</name>
</gene>
<protein>
    <recommendedName>
        <fullName>Calcium-binding protein 5</fullName>
        <shortName>CaBP5</shortName>
    </recommendedName>
</protein>
<proteinExistence type="evidence at protein level"/>
<feature type="chain" id="PRO_0000073524" description="Calcium-binding protein 5">
    <location>
        <begin position="1"/>
        <end position="173"/>
    </location>
</feature>
<feature type="domain" description="EF-hand 1" evidence="3">
    <location>
        <begin position="28"/>
        <end position="63"/>
    </location>
</feature>
<feature type="domain" description="EF-hand 2" evidence="3">
    <location>
        <begin position="82"/>
        <end position="99"/>
    </location>
</feature>
<feature type="domain" description="EF-hand 3" evidence="3">
    <location>
        <begin position="105"/>
        <end position="140"/>
    </location>
</feature>
<feature type="domain" description="EF-hand 4" evidence="3">
    <location>
        <begin position="142"/>
        <end position="173"/>
    </location>
</feature>
<feature type="binding site" evidence="3">
    <location>
        <position position="41"/>
    </location>
    <ligand>
        <name>Ca(2+)</name>
        <dbReference type="ChEBI" id="CHEBI:29108"/>
        <label>1</label>
    </ligand>
</feature>
<feature type="binding site" evidence="3">
    <location>
        <position position="43"/>
    </location>
    <ligand>
        <name>Ca(2+)</name>
        <dbReference type="ChEBI" id="CHEBI:29108"/>
        <label>1</label>
    </ligand>
</feature>
<feature type="binding site" evidence="3">
    <location>
        <position position="45"/>
    </location>
    <ligand>
        <name>Ca(2+)</name>
        <dbReference type="ChEBI" id="CHEBI:29108"/>
        <label>1</label>
    </ligand>
</feature>
<feature type="binding site" evidence="3">
    <location>
        <position position="52"/>
    </location>
    <ligand>
        <name>Ca(2+)</name>
        <dbReference type="ChEBI" id="CHEBI:29108"/>
        <label>1</label>
    </ligand>
</feature>
<feature type="binding site" evidence="3">
    <location>
        <position position="118"/>
    </location>
    <ligand>
        <name>Ca(2+)</name>
        <dbReference type="ChEBI" id="CHEBI:29108"/>
        <label>2</label>
    </ligand>
</feature>
<feature type="binding site" evidence="3">
    <location>
        <position position="120"/>
    </location>
    <ligand>
        <name>Ca(2+)</name>
        <dbReference type="ChEBI" id="CHEBI:29108"/>
        <label>2</label>
    </ligand>
</feature>
<feature type="binding site" evidence="3">
    <location>
        <position position="122"/>
    </location>
    <ligand>
        <name>Ca(2+)</name>
        <dbReference type="ChEBI" id="CHEBI:29108"/>
        <label>2</label>
    </ligand>
</feature>
<feature type="binding site" evidence="3">
    <location>
        <position position="124"/>
    </location>
    <ligand>
        <name>Ca(2+)</name>
        <dbReference type="ChEBI" id="CHEBI:29108"/>
        <label>2</label>
    </ligand>
</feature>
<feature type="binding site" evidence="3">
    <location>
        <position position="129"/>
    </location>
    <ligand>
        <name>Ca(2+)</name>
        <dbReference type="ChEBI" id="CHEBI:29108"/>
        <label>2</label>
    </ligand>
</feature>
<feature type="binding site" evidence="3">
    <location>
        <position position="155"/>
    </location>
    <ligand>
        <name>Ca(2+)</name>
        <dbReference type="ChEBI" id="CHEBI:29108"/>
        <label>3</label>
    </ligand>
</feature>
<feature type="binding site" evidence="3">
    <location>
        <position position="157"/>
    </location>
    <ligand>
        <name>Ca(2+)</name>
        <dbReference type="ChEBI" id="CHEBI:29108"/>
        <label>3</label>
    </ligand>
</feature>
<feature type="binding site" evidence="3">
    <location>
        <position position="159"/>
    </location>
    <ligand>
        <name>Ca(2+)</name>
        <dbReference type="ChEBI" id="CHEBI:29108"/>
        <label>3</label>
    </ligand>
</feature>
<feature type="binding site" evidence="3">
    <location>
        <position position="161"/>
    </location>
    <ligand>
        <name>Ca(2+)</name>
        <dbReference type="ChEBI" id="CHEBI:29108"/>
        <label>3</label>
    </ligand>
</feature>
<feature type="binding site" evidence="3">
    <location>
        <position position="166"/>
    </location>
    <ligand>
        <name>Ca(2+)</name>
        <dbReference type="ChEBI" id="CHEBI:29108"/>
        <label>3</label>
    </ligand>
</feature>
<feature type="sequence variant" id="VAR_033695" description="In dbSNP:rs34862923.">
    <original>T</original>
    <variation>R</variation>
    <location>
        <position position="65"/>
    </location>
</feature>
<feature type="sequence variant" id="VAR_048633" description="In dbSNP:rs8105198.">
    <original>L</original>
    <variation>P</variation>
    <location>
        <position position="80"/>
    </location>
</feature>
<feature type="sequence variant" id="VAR_020020" description="In dbSNP:rs3745746.">
    <original>V</original>
    <variation>A</variation>
    <location>
        <position position="128"/>
    </location>
</feature>
<feature type="sequence variant" id="VAR_048634" description="In dbSNP:rs34681062.">
    <original>E</original>
    <variation>K</variation>
    <location>
        <position position="140"/>
    </location>
</feature>
<feature type="sequence variant" id="VAR_048635" description="In dbSNP:rs10425606.">
    <original>I</original>
    <variation>S</variation>
    <location>
        <position position="147"/>
    </location>
</feature>
<accession>Q9NP86</accession>
<accession>A0AUY4</accession>
<evidence type="ECO:0000250" key="1">
    <source>
        <dbReference type="UniProtKB" id="Q9JLK3"/>
    </source>
</evidence>
<evidence type="ECO:0000250" key="2">
    <source>
        <dbReference type="UniProtKB" id="Q9N1Q8"/>
    </source>
</evidence>
<evidence type="ECO:0000255" key="3">
    <source>
        <dbReference type="PROSITE-ProRule" id="PRU00448"/>
    </source>
</evidence>
<evidence type="ECO:0000269" key="4">
    <source>
    </source>
</evidence>
<evidence type="ECO:0000269" key="5">
    <source>
    </source>
</evidence>
<dbReference type="EMBL" id="AF170815">
    <property type="protein sequence ID" value="AAF25798.1"/>
    <property type="molecule type" value="Genomic_DNA"/>
</dbReference>
<dbReference type="EMBL" id="AF170812">
    <property type="protein sequence ID" value="AAF25798.1"/>
    <property type="status" value="JOINED"/>
    <property type="molecule type" value="Genomic_DNA"/>
</dbReference>
<dbReference type="EMBL" id="AF170813">
    <property type="protein sequence ID" value="AAF25798.1"/>
    <property type="status" value="JOINED"/>
    <property type="molecule type" value="Genomic_DNA"/>
</dbReference>
<dbReference type="EMBL" id="AF170814">
    <property type="protein sequence ID" value="AAF25798.1"/>
    <property type="status" value="JOINED"/>
    <property type="molecule type" value="Genomic_DNA"/>
</dbReference>
<dbReference type="EMBL" id="AF169159">
    <property type="protein sequence ID" value="AAF25793.1"/>
    <property type="molecule type" value="mRNA"/>
</dbReference>
<dbReference type="EMBL" id="BC126133">
    <property type="protein sequence ID" value="AAI26134.1"/>
    <property type="molecule type" value="mRNA"/>
</dbReference>
<dbReference type="EMBL" id="BC126135">
    <property type="protein sequence ID" value="AAI26136.1"/>
    <property type="molecule type" value="mRNA"/>
</dbReference>
<dbReference type="CCDS" id="CCDS12709.1"/>
<dbReference type="RefSeq" id="NP_062829.1">
    <property type="nucleotide sequence ID" value="NM_019855.5"/>
</dbReference>
<dbReference type="SMR" id="Q9NP86"/>
<dbReference type="BioGRID" id="121142">
    <property type="interactions" value="39"/>
</dbReference>
<dbReference type="FunCoup" id="Q9NP86">
    <property type="interactions" value="30"/>
</dbReference>
<dbReference type="IntAct" id="Q9NP86">
    <property type="interactions" value="36"/>
</dbReference>
<dbReference type="STRING" id="9606.ENSP00000293255"/>
<dbReference type="PhosphoSitePlus" id="Q9NP86"/>
<dbReference type="BioMuta" id="CABP5"/>
<dbReference type="DMDM" id="13431356"/>
<dbReference type="MassIVE" id="Q9NP86"/>
<dbReference type="PaxDb" id="9606-ENSP00000293255"/>
<dbReference type="PeptideAtlas" id="Q9NP86"/>
<dbReference type="ProteomicsDB" id="81931"/>
<dbReference type="Antibodypedia" id="49583">
    <property type="antibodies" value="180 antibodies from 23 providers"/>
</dbReference>
<dbReference type="DNASU" id="56344"/>
<dbReference type="Ensembl" id="ENST00000293255.3">
    <property type="protein sequence ID" value="ENSP00000293255.1"/>
    <property type="gene ID" value="ENSG00000105507.3"/>
</dbReference>
<dbReference type="GeneID" id="56344"/>
<dbReference type="KEGG" id="hsa:56344"/>
<dbReference type="MANE-Select" id="ENST00000293255.3">
    <property type="protein sequence ID" value="ENSP00000293255.1"/>
    <property type="RefSeq nucleotide sequence ID" value="NM_019855.5"/>
    <property type="RefSeq protein sequence ID" value="NP_062829.1"/>
</dbReference>
<dbReference type="UCSC" id="uc002phu.3">
    <property type="organism name" value="human"/>
</dbReference>
<dbReference type="AGR" id="HGNC:13714"/>
<dbReference type="CTD" id="56344"/>
<dbReference type="DisGeNET" id="56344"/>
<dbReference type="GeneCards" id="CABP5"/>
<dbReference type="HGNC" id="HGNC:13714">
    <property type="gene designation" value="CABP5"/>
</dbReference>
<dbReference type="HPA" id="ENSG00000105507">
    <property type="expression patterns" value="Tissue enriched (retina)"/>
</dbReference>
<dbReference type="MIM" id="607315">
    <property type="type" value="gene"/>
</dbReference>
<dbReference type="neXtProt" id="NX_Q9NP86"/>
<dbReference type="OpenTargets" id="ENSG00000105507"/>
<dbReference type="PharmGKB" id="PA26004"/>
<dbReference type="VEuPathDB" id="HostDB:ENSG00000105507"/>
<dbReference type="eggNOG" id="KOG0027">
    <property type="taxonomic scope" value="Eukaryota"/>
</dbReference>
<dbReference type="GeneTree" id="ENSGT00940000160506"/>
<dbReference type="HOGENOM" id="CLU_061288_2_2_1"/>
<dbReference type="InParanoid" id="Q9NP86"/>
<dbReference type="OMA" id="DFVEMMT"/>
<dbReference type="OrthoDB" id="26525at2759"/>
<dbReference type="PAN-GO" id="Q9NP86">
    <property type="GO annotations" value="3 GO annotations based on evolutionary models"/>
</dbReference>
<dbReference type="PhylomeDB" id="Q9NP86"/>
<dbReference type="TreeFam" id="TF334804"/>
<dbReference type="PathwayCommons" id="Q9NP86"/>
<dbReference type="SignaLink" id="Q9NP86"/>
<dbReference type="BioGRID-ORCS" id="56344">
    <property type="hits" value="10 hits in 1142 CRISPR screens"/>
</dbReference>
<dbReference type="GenomeRNAi" id="56344"/>
<dbReference type="Pharos" id="Q9NP86">
    <property type="development level" value="Tbio"/>
</dbReference>
<dbReference type="PRO" id="PR:Q9NP86"/>
<dbReference type="Proteomes" id="UP000005640">
    <property type="component" value="Chromosome 19"/>
</dbReference>
<dbReference type="RNAct" id="Q9NP86">
    <property type="molecule type" value="protein"/>
</dbReference>
<dbReference type="Bgee" id="ENSG00000105507">
    <property type="expression patterns" value="Expressed in monocyte and 30 other cell types or tissues"/>
</dbReference>
<dbReference type="GO" id="GO:0005737">
    <property type="term" value="C:cytoplasm"/>
    <property type="evidence" value="ECO:0000318"/>
    <property type="project" value="GO_Central"/>
</dbReference>
<dbReference type="GO" id="GO:0005829">
    <property type="term" value="C:cytosol"/>
    <property type="evidence" value="ECO:0000314"/>
    <property type="project" value="MGI"/>
</dbReference>
<dbReference type="GO" id="GO:0005246">
    <property type="term" value="F:calcium channel regulator activity"/>
    <property type="evidence" value="ECO:0000318"/>
    <property type="project" value="GO_Central"/>
</dbReference>
<dbReference type="GO" id="GO:0005509">
    <property type="term" value="F:calcium ion binding"/>
    <property type="evidence" value="ECO:0000303"/>
    <property type="project" value="UniProtKB"/>
</dbReference>
<dbReference type="GO" id="GO:0007165">
    <property type="term" value="P:signal transduction"/>
    <property type="evidence" value="ECO:0000303"/>
    <property type="project" value="UniProtKB"/>
</dbReference>
<dbReference type="CDD" id="cd00051">
    <property type="entry name" value="EFh"/>
    <property type="match status" value="1"/>
</dbReference>
<dbReference type="FunFam" id="1.10.238.10:FF:000069">
    <property type="entry name" value="calcium-binding protein 1 isoform X1"/>
    <property type="match status" value="1"/>
</dbReference>
<dbReference type="FunFam" id="1.10.238.10:FF:000037">
    <property type="entry name" value="calcium-binding protein 1 isoform X2"/>
    <property type="match status" value="1"/>
</dbReference>
<dbReference type="Gene3D" id="1.10.238.10">
    <property type="entry name" value="EF-hand"/>
    <property type="match status" value="2"/>
</dbReference>
<dbReference type="InterPro" id="IPR043582">
    <property type="entry name" value="CaBP1/2/4/5"/>
</dbReference>
<dbReference type="InterPro" id="IPR011992">
    <property type="entry name" value="EF-hand-dom_pair"/>
</dbReference>
<dbReference type="InterPro" id="IPR018247">
    <property type="entry name" value="EF_Hand_1_Ca_BS"/>
</dbReference>
<dbReference type="InterPro" id="IPR002048">
    <property type="entry name" value="EF_hand_dom"/>
</dbReference>
<dbReference type="PANTHER" id="PTHR45917">
    <property type="entry name" value="CALCIUM-BINDING PROTEIN 1-RELATED"/>
    <property type="match status" value="1"/>
</dbReference>
<dbReference type="PANTHER" id="PTHR45917:SF3">
    <property type="entry name" value="CALCIUM-BINDING PROTEIN 5"/>
    <property type="match status" value="1"/>
</dbReference>
<dbReference type="Pfam" id="PF13499">
    <property type="entry name" value="EF-hand_7"/>
    <property type="match status" value="2"/>
</dbReference>
<dbReference type="SMART" id="SM00054">
    <property type="entry name" value="EFh"/>
    <property type="match status" value="3"/>
</dbReference>
<dbReference type="SUPFAM" id="SSF47473">
    <property type="entry name" value="EF-hand"/>
    <property type="match status" value="1"/>
</dbReference>
<dbReference type="PROSITE" id="PS00018">
    <property type="entry name" value="EF_HAND_1"/>
    <property type="match status" value="3"/>
</dbReference>
<dbReference type="PROSITE" id="PS50222">
    <property type="entry name" value="EF_HAND_2"/>
    <property type="match status" value="4"/>
</dbReference>
<comment type="function">
    <text evidence="1">Inhibits calcium-dependent inactivation of L-type calcium channel and shifts voltage dependence of activation to more depolarized membrane potentials (By similarity). Involved in the transmission of light signals (By similarity). May positively regulate neurotransmitter vesicle endocytosis and exocytosis in a salt-dependent manner (By similarity). May play a role in the extension and network organization of neurites (By similarity).</text>
</comment>
<comment type="subunit">
    <text evidence="1 2">Interacts with CACNA1C (via C-terminal CDB motif) in a calcium-dependent manner (By similarity). Interacts with STXBP1 (By similarity). Interacts with MYO6 (By similarity).</text>
</comment>
<comment type="interaction">
    <interactant intactId="EBI-10311131">
        <id>Q9NP86</id>
    </interactant>
    <interactant intactId="EBI-17721098">
        <id>Q8WXI4-2</id>
        <label>ACOT11</label>
    </interactant>
    <organismsDiffer>false</organismsDiffer>
    <experiments>3</experiments>
</comment>
<comment type="interaction">
    <interactant intactId="EBI-10311131">
        <id>Q9NP86</id>
    </interactant>
    <interactant intactId="EBI-14493093">
        <id>Q3KP44</id>
        <label>ANKRD55</label>
    </interactant>
    <organismsDiffer>false</organismsDiffer>
    <experiments>3</experiments>
</comment>
<comment type="interaction">
    <interactant intactId="EBI-10311131">
        <id>Q9NP86</id>
    </interactant>
    <interactant intactId="EBI-10179719">
        <id>A2RRN7</id>
        <label>CADPS</label>
    </interactant>
    <organismsDiffer>false</organismsDiffer>
    <experiments>3</experiments>
</comment>
<comment type="interaction">
    <interactant intactId="EBI-10311131">
        <id>Q9NP86</id>
    </interactant>
    <interactant intactId="EBI-742887">
        <id>Q8TAP6</id>
        <label>CEP76</label>
    </interactant>
    <organismsDiffer>false</organismsDiffer>
    <experiments>8</experiments>
</comment>
<comment type="interaction">
    <interactant intactId="EBI-10311131">
        <id>Q9NP86</id>
    </interactant>
    <interactant intactId="EBI-6873363">
        <id>Q8WUE5</id>
        <label>CT55</label>
    </interactant>
    <organismsDiffer>false</organismsDiffer>
    <experiments>3</experiments>
</comment>
<comment type="interaction">
    <interactant intactId="EBI-10311131">
        <id>Q9NP86</id>
    </interactant>
    <interactant intactId="EBI-742054">
        <id>Q96D03</id>
        <label>DDIT4L</label>
    </interactant>
    <organismsDiffer>false</organismsDiffer>
    <experiments>3</experiments>
</comment>
<comment type="interaction">
    <interactant intactId="EBI-10311131">
        <id>Q9NP86</id>
    </interactant>
    <interactant intactId="EBI-747204">
        <id>Q9UKT9</id>
        <label>IKZF3</label>
    </interactant>
    <organismsDiffer>false</organismsDiffer>
    <experiments>5</experiments>
</comment>
<comment type="interaction">
    <interactant intactId="EBI-10311131">
        <id>Q9NP86</id>
    </interactant>
    <interactant intactId="EBI-6509505">
        <id>Q0VD86</id>
        <label>INCA1</label>
    </interactant>
    <organismsDiffer>false</organismsDiffer>
    <experiments>10</experiments>
</comment>
<comment type="interaction">
    <interactant intactId="EBI-10311131">
        <id>Q9NP86</id>
    </interactant>
    <interactant intactId="EBI-739832">
        <id>Q8TBB1</id>
        <label>LNX1</label>
    </interactant>
    <organismsDiffer>false</organismsDiffer>
    <experiments>3</experiments>
</comment>
<comment type="interaction">
    <interactant intactId="EBI-10311131">
        <id>Q9NP86</id>
    </interactant>
    <interactant intactId="EBI-741037">
        <id>Q9BRK4</id>
        <label>LZTS2</label>
    </interactant>
    <organismsDiffer>false</organismsDiffer>
    <experiments>3</experiments>
</comment>
<comment type="interaction">
    <interactant intactId="EBI-10311131">
        <id>Q9NP86</id>
    </interactant>
    <interactant intactId="EBI-19944212">
        <id>A8MW99</id>
        <label>MEI4</label>
    </interactant>
    <organismsDiffer>false</organismsDiffer>
    <experiments>3</experiments>
</comment>
<comment type="interaction">
    <interactant intactId="EBI-10311131">
        <id>Q9NP86</id>
    </interactant>
    <interactant intactId="EBI-744871">
        <id>O00746</id>
        <label>NME4</label>
    </interactant>
    <organismsDiffer>false</organismsDiffer>
    <experiments>3</experiments>
</comment>
<comment type="interaction">
    <interactant intactId="EBI-10311131">
        <id>Q9NP86</id>
    </interactant>
    <interactant intactId="EBI-10240813">
        <id>Q3KNR5</id>
        <label>PAX4</label>
    </interactant>
    <organismsDiffer>false</organismsDiffer>
    <experiments>3</experiments>
</comment>
<comment type="interaction">
    <interactant intactId="EBI-10311131">
        <id>Q9NP86</id>
    </interactant>
    <interactant intactId="EBI-359352">
        <id>P25786</id>
        <label>PSMA1</label>
    </interactant>
    <organismsDiffer>false</organismsDiffer>
    <experiments>3</experiments>
</comment>
<comment type="interaction">
    <interactant intactId="EBI-10311131">
        <id>Q9NP86</id>
    </interactant>
    <interactant intactId="EBI-307352">
        <id>Q04864</id>
        <label>REL</label>
    </interactant>
    <organismsDiffer>false</organismsDiffer>
    <experiments>3</experiments>
</comment>
<comment type="interaction">
    <interactant intactId="EBI-10311131">
        <id>Q9NP86</id>
    </interactant>
    <interactant intactId="EBI-727004">
        <id>O00560</id>
        <label>SDCBP</label>
    </interactant>
    <organismsDiffer>false</organismsDiffer>
    <experiments>3</experiments>
</comment>
<comment type="interaction">
    <interactant intactId="EBI-10311131">
        <id>Q9NP86</id>
    </interactant>
    <interactant intactId="EBI-1170418">
        <id>Q9Y6N5</id>
        <label>SQOR</label>
    </interactant>
    <organismsDiffer>false</organismsDiffer>
    <experiments>2</experiments>
</comment>
<comment type="interaction">
    <interactant intactId="EBI-10311131">
        <id>Q9NP86</id>
    </interactant>
    <interactant intactId="EBI-533224">
        <id>P15884</id>
        <label>TCF4</label>
    </interactant>
    <organismsDiffer>false</organismsDiffer>
    <experiments>5</experiments>
</comment>
<comment type="interaction">
    <interactant intactId="EBI-10311131">
        <id>Q9NP86</id>
    </interactant>
    <interactant intactId="EBI-11741437">
        <id>Q08117-2</id>
        <label>TLE5</label>
    </interactant>
    <organismsDiffer>false</organismsDiffer>
    <experiments>5</experiments>
</comment>
<comment type="interaction">
    <interactant intactId="EBI-10311131">
        <id>Q9NP86</id>
    </interactant>
    <interactant intactId="EBI-746692">
        <id>P19237</id>
        <label>TNNI1</label>
    </interactant>
    <organismsDiffer>false</organismsDiffer>
    <experiments>3</experiments>
</comment>
<comment type="interaction">
    <interactant intactId="EBI-10311131">
        <id>Q9NP86</id>
    </interactant>
    <interactant intactId="EBI-2799833">
        <id>Q8N1B4</id>
        <label>VPS52</label>
    </interactant>
    <organismsDiffer>false</organismsDiffer>
    <experiments>3</experiments>
</comment>
<comment type="interaction">
    <interactant intactId="EBI-10311131">
        <id>Q9NP86</id>
    </interactant>
    <interactant intactId="EBI-12287587">
        <id>B2RXF5</id>
        <label>ZBTB42</label>
    </interactant>
    <organismsDiffer>false</organismsDiffer>
    <experiments>3</experiments>
</comment>
<comment type="interaction">
    <interactant intactId="EBI-10311131">
        <id>Q9NP86</id>
    </interactant>
    <interactant intactId="EBI-14104088">
        <id>Q53FD0-2</id>
        <label>ZC2HC1C</label>
    </interactant>
    <organismsDiffer>false</organismsDiffer>
    <experiments>3</experiments>
</comment>
<comment type="interaction">
    <interactant intactId="EBI-10311131">
        <id>Q9NP86</id>
    </interactant>
    <interactant intactId="EBI-2818641">
        <id>Q969J2</id>
        <label>ZKSCAN4</label>
    </interactant>
    <organismsDiffer>false</organismsDiffer>
    <experiments>7</experiments>
</comment>
<comment type="interaction">
    <interactant intactId="EBI-10311131">
        <id>Q9NP86</id>
    </interactant>
    <interactant intactId="EBI-10234472">
        <id>Q14929</id>
        <label>ZNF169</label>
    </interactant>
    <organismsDiffer>false</organismsDiffer>
    <experiments>3</experiments>
</comment>
<comment type="interaction">
    <interactant intactId="EBI-10311131">
        <id>Q9NP86</id>
    </interactant>
    <interactant intactId="EBI-10322867">
        <id>Q9UK11</id>
        <label>ZNF223</label>
    </interactant>
    <organismsDiffer>false</organismsDiffer>
    <experiments>3</experiments>
</comment>
<comment type="interaction">
    <interactant intactId="EBI-10311131">
        <id>Q9NP86</id>
    </interactant>
    <interactant intactId="EBI-12068564">
        <id>Q9UJW7</id>
        <label>ZNF229</label>
    </interactant>
    <organismsDiffer>false</organismsDiffer>
    <experiments>3</experiments>
</comment>
<comment type="interaction">
    <interactant intactId="EBI-10311131">
        <id>Q9NP86</id>
    </interactant>
    <interactant intactId="EBI-8489342">
        <id>P59817</id>
        <label>ZNF280A</label>
    </interactant>
    <organismsDiffer>false</organismsDiffer>
    <experiments>3</experiments>
</comment>
<comment type="interaction">
    <interactant intactId="EBI-10311131">
        <id>Q9NP86</id>
    </interactant>
    <interactant intactId="EBI-8643207">
        <id>Q8TD17</id>
        <label>ZNF398</label>
    </interactant>
    <organismsDiffer>false</organismsDiffer>
    <experiments>3</experiments>
</comment>
<comment type="interaction">
    <interactant intactId="EBI-10311131">
        <id>Q9NP86</id>
    </interactant>
    <interactant intactId="EBI-17269964">
        <id>Q6S9Z5</id>
        <label>ZNF474</label>
    </interactant>
    <organismsDiffer>false</organismsDiffer>
    <experiments>3</experiments>
</comment>
<comment type="interaction">
    <interactant intactId="EBI-10311131">
        <id>Q9NP86</id>
    </interactant>
    <interactant intactId="EBI-746605">
        <id>Q9BR84</id>
        <label>ZNF559</label>
    </interactant>
    <organismsDiffer>false</organismsDiffer>
    <experiments>3</experiments>
</comment>
<comment type="interaction">
    <interactant intactId="EBI-10311131">
        <id>Q9NP86</id>
    </interactant>
    <interactant intactId="EBI-4395669">
        <id>Q6ZNG0</id>
        <label>ZNF620</label>
    </interactant>
    <organismsDiffer>false</organismsDiffer>
    <experiments>3</experiments>
</comment>
<comment type="interaction">
    <interactant intactId="EBI-10311131">
        <id>Q9NP86</id>
    </interactant>
    <interactant intactId="EBI-2799450">
        <id>Q8N3J9</id>
        <label>ZNF664</label>
    </interactant>
    <organismsDiffer>false</organismsDiffer>
    <experiments>3</experiments>
</comment>
<comment type="interaction">
    <interactant intactId="EBI-10311131">
        <id>Q9NP86</id>
    </interactant>
    <interactant intactId="EBI-12006574">
        <id>Q96BR6</id>
        <label>ZNF669</label>
    </interactant>
    <organismsDiffer>false</organismsDiffer>
    <experiments>3</experiments>
</comment>
<comment type="interaction">
    <interactant intactId="EBI-10311131">
        <id>Q9NP86</id>
    </interactant>
    <interactant intactId="EBI-5667516">
        <id>Q9Y2P0</id>
        <label>ZNF835</label>
    </interactant>
    <organismsDiffer>false</organismsDiffer>
    <experiments>3</experiments>
</comment>
<comment type="interaction">
    <interactant intactId="EBI-10311131">
        <id>Q9NP86</id>
    </interactant>
    <interactant intactId="EBI-10225757">
        <id>Q08AG5</id>
        <label>ZNF844</label>
    </interactant>
    <organismsDiffer>false</organismsDiffer>
    <experiments>3</experiments>
</comment>
<comment type="subcellular location">
    <subcellularLocation>
        <location evidence="5">Cytoplasm</location>
    </subcellularLocation>
</comment>
<comment type="tissue specificity">
    <text evidence="4">Retina.</text>
</comment>